<reference key="1">
    <citation type="journal article" date="1998" name="Genomics">
        <title>Differential expansion of the N-formylpeptide receptor gene cluster in human and mouse.</title>
        <authorList>
            <person name="Gao J.-L."/>
            <person name="Chen H."/>
            <person name="Filie J.D."/>
            <person name="Kozak C.A."/>
            <person name="Murphy P.M."/>
        </authorList>
    </citation>
    <scope>NUCLEOTIDE SEQUENCE [GENOMIC DNA]</scope>
</reference>
<reference key="2">
    <citation type="journal article" date="2009" name="PLoS Biol.">
        <title>Lineage-specific biology revealed by a finished genome assembly of the mouse.</title>
        <authorList>
            <person name="Church D.M."/>
            <person name="Goodstadt L."/>
            <person name="Hillier L.W."/>
            <person name="Zody M.C."/>
            <person name="Goldstein S."/>
            <person name="She X."/>
            <person name="Bult C.J."/>
            <person name="Agarwala R."/>
            <person name="Cherry J.L."/>
            <person name="DiCuccio M."/>
            <person name="Hlavina W."/>
            <person name="Kapustin Y."/>
            <person name="Meric P."/>
            <person name="Maglott D."/>
            <person name="Birtle Z."/>
            <person name="Marques A.C."/>
            <person name="Graves T."/>
            <person name="Zhou S."/>
            <person name="Teague B."/>
            <person name="Potamousis K."/>
            <person name="Churas C."/>
            <person name="Place M."/>
            <person name="Herschleb J."/>
            <person name="Runnheim R."/>
            <person name="Forrest D."/>
            <person name="Amos-Landgraf J."/>
            <person name="Schwartz D.C."/>
            <person name="Cheng Z."/>
            <person name="Lindblad-Toh K."/>
            <person name="Eichler E.E."/>
            <person name="Ponting C.P."/>
        </authorList>
    </citation>
    <scope>NUCLEOTIDE SEQUENCE [LARGE SCALE GENOMIC DNA]</scope>
    <source>
        <strain>C57BL/6J</strain>
    </source>
</reference>
<reference key="3">
    <citation type="journal article" date="2004" name="Genome Res.">
        <title>The status, quality, and expansion of the NIH full-length cDNA project: the Mammalian Gene Collection (MGC).</title>
        <authorList>
            <consortium name="The MGC Project Team"/>
        </authorList>
    </citation>
    <scope>NUCLEOTIDE SEQUENCE [LARGE SCALE MRNA]</scope>
</reference>
<reference key="4">
    <citation type="journal article" date="2009" name="Nature">
        <title>Formyl peptide receptor-like proteins are a novel family of vomeronasal chemosensors.</title>
        <authorList>
            <person name="Riviere S."/>
            <person name="Challet L."/>
            <person name="Fluegge D."/>
            <person name="Spehr M."/>
            <person name="Rodriguez I."/>
        </authorList>
    </citation>
    <scope>TISSUE SPECIFICITY</scope>
    <scope>FUNCTION</scope>
</reference>
<reference key="5">
    <citation type="journal article" date="2009" name="Proc. Natl. Acad. Sci. U.S.A.">
        <title>Formyl peptide receptors are candidate chemosensory receptors in the vomeronasal organ.</title>
        <authorList>
            <person name="Liberles S.D."/>
            <person name="Horowitz L.F."/>
            <person name="Kuang D."/>
            <person name="Contos J.J."/>
            <person name="Wilson K.L."/>
            <person name="Siltberg-Liberles J."/>
            <person name="Liberles D.A."/>
            <person name="Buck L.B."/>
        </authorList>
    </citation>
    <scope>TISSUE SPECIFICITY</scope>
</reference>
<proteinExistence type="evidence at transcript level"/>
<evidence type="ECO:0000255" key="1"/>
<evidence type="ECO:0000255" key="2">
    <source>
        <dbReference type="PROSITE-ProRule" id="PRU00521"/>
    </source>
</evidence>
<evidence type="ECO:0000269" key="3">
    <source>
    </source>
</evidence>
<evidence type="ECO:0000269" key="4">
    <source>
    </source>
</evidence>
<evidence type="ECO:0000305" key="5"/>
<feature type="chain" id="PRO_0000382024" description="Formyl peptide receptor-related sequence 4">
    <location>
        <begin position="1"/>
        <end position="323"/>
    </location>
</feature>
<feature type="topological domain" description="Extracellular" evidence="1">
    <location>
        <begin position="1"/>
        <end position="29"/>
    </location>
</feature>
<feature type="transmembrane region" description="Helical; Name=1" evidence="1">
    <location>
        <begin position="30"/>
        <end position="50"/>
    </location>
</feature>
<feature type="topological domain" description="Cytoplasmic" evidence="1">
    <location>
        <begin position="51"/>
        <end position="66"/>
    </location>
</feature>
<feature type="transmembrane region" description="Helical; Name=2" evidence="1">
    <location>
        <begin position="67"/>
        <end position="87"/>
    </location>
</feature>
<feature type="topological domain" description="Extracellular" evidence="1">
    <location>
        <begin position="88"/>
        <end position="99"/>
    </location>
</feature>
<feature type="transmembrane region" description="Helical; Name=3" evidence="1">
    <location>
        <begin position="100"/>
        <end position="120"/>
    </location>
</feature>
<feature type="topological domain" description="Cytoplasmic" evidence="1">
    <location>
        <begin position="121"/>
        <end position="144"/>
    </location>
</feature>
<feature type="transmembrane region" description="Helical; Name=4" evidence="1">
    <location>
        <begin position="145"/>
        <end position="165"/>
    </location>
</feature>
<feature type="topological domain" description="Extracellular" evidence="1">
    <location>
        <begin position="166"/>
        <end position="202"/>
    </location>
</feature>
<feature type="transmembrane region" description="Helical; Name=5" evidence="1">
    <location>
        <begin position="203"/>
        <end position="223"/>
    </location>
</feature>
<feature type="topological domain" description="Cytoplasmic" evidence="1">
    <location>
        <begin position="224"/>
        <end position="241"/>
    </location>
</feature>
<feature type="transmembrane region" description="Helical; Name=6" evidence="1">
    <location>
        <begin position="242"/>
        <end position="262"/>
    </location>
</feature>
<feature type="topological domain" description="Extracellular" evidence="1">
    <location>
        <begin position="263"/>
        <end position="280"/>
    </location>
</feature>
<feature type="transmembrane region" description="Helical; Name=7" evidence="1">
    <location>
        <begin position="281"/>
        <end position="301"/>
    </location>
</feature>
<feature type="topological domain" description="Cytoplasmic" evidence="1">
    <location>
        <begin position="302"/>
        <end position="323"/>
    </location>
</feature>
<feature type="glycosylation site" description="N-linked (GlcNAc...) asparagine" evidence="1">
    <location>
        <position position="4"/>
    </location>
</feature>
<feature type="glycosylation site" description="N-linked (GlcNAc...) asparagine" evidence="1">
    <location>
        <position position="10"/>
    </location>
</feature>
<feature type="glycosylation site" description="N-linked (GlcNAc...) asparagine" evidence="1">
    <location>
        <position position="269"/>
    </location>
</feature>
<feature type="disulfide bond" evidence="2">
    <location>
        <begin position="98"/>
        <end position="176"/>
    </location>
</feature>
<feature type="sequence conflict" description="In Ref. 1; AAC34587 and 3; AAI15536." evidence="5" ref="1 3">
    <original>R</original>
    <variation>S</variation>
    <location>
        <position position="23"/>
    </location>
</feature>
<feature type="sequence conflict" description="In Ref. 1; AAC34587." evidence="5" ref="1">
    <original>A</original>
    <variation>V</variation>
    <location>
        <position position="76"/>
    </location>
</feature>
<feature type="sequence conflict" description="In Ref. 1; AAC34587." evidence="5" ref="1">
    <original>V</original>
    <variation>M</variation>
    <location>
        <position position="193"/>
    </location>
</feature>
<feature type="sequence conflict" description="In Ref. 1; AAC34587." evidence="5" ref="1">
    <original>V</original>
    <variation>I</variation>
    <location>
        <position position="248"/>
    </location>
</feature>
<gene>
    <name type="primary">Fpr-rs4</name>
</gene>
<name>FPRS4_MOUSE</name>
<dbReference type="EMBL" id="AF071182">
    <property type="protein sequence ID" value="AAC34587.1"/>
    <property type="molecule type" value="Genomic_DNA"/>
</dbReference>
<dbReference type="EMBL" id="AC171405">
    <property type="status" value="NOT_ANNOTATED_CDS"/>
    <property type="molecule type" value="Genomic_DNA"/>
</dbReference>
<dbReference type="EMBL" id="BC115534">
    <property type="protein sequence ID" value="AAI15535.1"/>
    <property type="molecule type" value="mRNA"/>
</dbReference>
<dbReference type="EMBL" id="BC115535">
    <property type="protein sequence ID" value="AAI15536.1"/>
    <property type="molecule type" value="mRNA"/>
</dbReference>
<dbReference type="CCDS" id="CCDS49968.1"/>
<dbReference type="RefSeq" id="NP_032067.2">
    <property type="nucleotide sequence ID" value="NM_008041.2"/>
</dbReference>
<dbReference type="SMR" id="A4FUQ5"/>
<dbReference type="FunCoup" id="A4FUQ5">
    <property type="interactions" value="375"/>
</dbReference>
<dbReference type="STRING" id="10090.ENSMUSP00000093311"/>
<dbReference type="GlyCosmos" id="A4FUQ5">
    <property type="glycosylation" value="3 sites, No reported glycans"/>
</dbReference>
<dbReference type="GlyGen" id="A4FUQ5">
    <property type="glycosylation" value="3 sites"/>
</dbReference>
<dbReference type="PaxDb" id="10090-ENSMUSP00000093311"/>
<dbReference type="DNASU" id="14291"/>
<dbReference type="Ensembl" id="ENSMUST00000095651.2">
    <property type="protein sequence ID" value="ENSMUSP00000093311.2"/>
    <property type="gene ID" value="ENSMUSG00000048062.5"/>
</dbReference>
<dbReference type="GeneID" id="14291"/>
<dbReference type="KEGG" id="mmu:14291"/>
<dbReference type="UCSC" id="uc012alh.1">
    <property type="organism name" value="mouse"/>
</dbReference>
<dbReference type="AGR" id="MGI:1278317"/>
<dbReference type="CTD" id="14291"/>
<dbReference type="MGI" id="MGI:1278317">
    <property type="gene designation" value="Fpr-rs4"/>
</dbReference>
<dbReference type="VEuPathDB" id="HostDB:ENSMUSG00000048062"/>
<dbReference type="eggNOG" id="KOG3656">
    <property type="taxonomic scope" value="Eukaryota"/>
</dbReference>
<dbReference type="GeneTree" id="ENSGT01020000230438"/>
<dbReference type="HOGENOM" id="CLU_009579_8_0_1"/>
<dbReference type="InParanoid" id="A4FUQ5"/>
<dbReference type="OMA" id="ISKFESW"/>
<dbReference type="OrthoDB" id="6088892at2759"/>
<dbReference type="PhylomeDB" id="A4FUQ5"/>
<dbReference type="TreeFam" id="TF330976"/>
<dbReference type="Reactome" id="R-MMU-418594">
    <property type="pathway name" value="G alpha (i) signalling events"/>
</dbReference>
<dbReference type="Reactome" id="R-MMU-444473">
    <property type="pathway name" value="Formyl peptide receptors bind formyl peptides and many other ligands"/>
</dbReference>
<dbReference type="BioGRID-ORCS" id="14291">
    <property type="hits" value="4 hits in 76 CRISPR screens"/>
</dbReference>
<dbReference type="PRO" id="PR:A4FUQ5"/>
<dbReference type="Proteomes" id="UP000000589">
    <property type="component" value="Chromosome 17"/>
</dbReference>
<dbReference type="RNAct" id="A4FUQ5">
    <property type="molecule type" value="protein"/>
</dbReference>
<dbReference type="Bgee" id="ENSMUSG00000048062">
    <property type="expression patterns" value="Expressed in gastrula and 1 other cell type or tissue"/>
</dbReference>
<dbReference type="GO" id="GO:0005886">
    <property type="term" value="C:plasma membrane"/>
    <property type="evidence" value="ECO:0007669"/>
    <property type="project" value="UniProtKB-SubCell"/>
</dbReference>
<dbReference type="GO" id="GO:0004982">
    <property type="term" value="F:N-formyl peptide receptor activity"/>
    <property type="evidence" value="ECO:0000314"/>
    <property type="project" value="MGI"/>
</dbReference>
<dbReference type="FunFam" id="1.20.1070.10:FF:000034">
    <property type="entry name" value="G-protein coupled receptor 1"/>
    <property type="match status" value="1"/>
</dbReference>
<dbReference type="Gene3D" id="1.20.1070.10">
    <property type="entry name" value="Rhodopsin 7-helix transmembrane proteins"/>
    <property type="match status" value="1"/>
</dbReference>
<dbReference type="InterPro" id="IPR000826">
    <property type="entry name" value="Formyl_rcpt-rel"/>
</dbReference>
<dbReference type="InterPro" id="IPR000276">
    <property type="entry name" value="GPCR_Rhodpsn"/>
</dbReference>
<dbReference type="InterPro" id="IPR017452">
    <property type="entry name" value="GPCR_Rhodpsn_7TM"/>
</dbReference>
<dbReference type="PANTHER" id="PTHR24225">
    <property type="entry name" value="CHEMOTACTIC RECEPTOR"/>
    <property type="match status" value="1"/>
</dbReference>
<dbReference type="PANTHER" id="PTHR24225:SF18">
    <property type="entry name" value="FORMYL PEPTIDE RECEPTOR-RELATED SEQUENCE 3-RELATED"/>
    <property type="match status" value="1"/>
</dbReference>
<dbReference type="Pfam" id="PF00001">
    <property type="entry name" value="7tm_1"/>
    <property type="match status" value="1"/>
</dbReference>
<dbReference type="PRINTS" id="PR00526">
    <property type="entry name" value="FMETLEUPHER"/>
</dbReference>
<dbReference type="PRINTS" id="PR00237">
    <property type="entry name" value="GPCRRHODOPSN"/>
</dbReference>
<dbReference type="SUPFAM" id="SSF81321">
    <property type="entry name" value="Family A G protein-coupled receptor-like"/>
    <property type="match status" value="1"/>
</dbReference>
<dbReference type="PROSITE" id="PS00237">
    <property type="entry name" value="G_PROTEIN_RECEP_F1_1"/>
    <property type="match status" value="1"/>
</dbReference>
<dbReference type="PROSITE" id="PS50262">
    <property type="entry name" value="G_PROTEIN_RECEP_F1_2"/>
    <property type="match status" value="1"/>
</dbReference>
<keyword id="KW-1003">Cell membrane</keyword>
<keyword id="KW-1015">Disulfide bond</keyword>
<keyword id="KW-0297">G-protein coupled receptor</keyword>
<keyword id="KW-0325">Glycoprotein</keyword>
<keyword id="KW-0472">Membrane</keyword>
<keyword id="KW-0675">Receptor</keyword>
<keyword id="KW-1185">Reference proteome</keyword>
<keyword id="KW-0807">Transducer</keyword>
<keyword id="KW-0812">Transmembrane</keyword>
<keyword id="KW-1133">Transmembrane helix</keyword>
<accession>A4FUQ5</accession>
<accession>A4QMY2</accession>
<accession>E9QPJ4</accession>
<accession>O88538</accession>
<sequence>MEVNISMPLNGSEVVFYDSTTSRVLWILSLVVLFITFVLGVLGNGLVIWVAGFQMAHTVTTVSYLNLALSDLSFMATLPLHIISMVMRGKWLFGWFLCKLVHIIANINLFVSIFLITLIAMDRCICVLCPVWSQNHRTVSLARKVVLGAWIFALLLTLPHFLFLTTVRDARGDVYCISKFESWVATSEEQLKVSVIAATASGIINFIIGFSMPMSFIAICYGLMAAKICRRGFVNSSRPLRVLTAVAVSFFVCWFPFQLIMLLGNIFNNETLSIIHMLVNPANTLASFNSCLNPILYVFLGQEFRDRLIYSLYASLERALRED</sequence>
<comment type="function">
    <text evidence="3">May have an olfactory function associated with the identification of pathogens or of pathogenic states.</text>
</comment>
<comment type="subcellular location">
    <subcellularLocation>
        <location>Cell membrane</location>
        <topology>Multi-pass membrane protein</topology>
    </subcellularLocation>
</comment>
<comment type="tissue specificity">
    <text evidence="3 4">Expressed in 0.6 % of a subset of sensory neurons located in the apical layer of the vomeronasal organ. Each neuron appears to express only one receptor gene.</text>
</comment>
<comment type="similarity">
    <text evidence="2">Belongs to the G-protein coupled receptor 1 family.</text>
</comment>
<comment type="online information" name="Protein Spotlight">
    <link uri="https://www.proteinspotlight.org/back_issues/114"/>
    <text>A sickly smell - Issue 114 of February 2010</text>
</comment>
<protein>
    <recommendedName>
        <fullName>Formyl peptide receptor-related sequence 4</fullName>
    </recommendedName>
    <alternativeName>
        <fullName>N-formylpeptide receptor-like 4</fullName>
    </alternativeName>
</protein>
<organism>
    <name type="scientific">Mus musculus</name>
    <name type="common">Mouse</name>
    <dbReference type="NCBI Taxonomy" id="10090"/>
    <lineage>
        <taxon>Eukaryota</taxon>
        <taxon>Metazoa</taxon>
        <taxon>Chordata</taxon>
        <taxon>Craniata</taxon>
        <taxon>Vertebrata</taxon>
        <taxon>Euteleostomi</taxon>
        <taxon>Mammalia</taxon>
        <taxon>Eutheria</taxon>
        <taxon>Euarchontoglires</taxon>
        <taxon>Glires</taxon>
        <taxon>Rodentia</taxon>
        <taxon>Myomorpha</taxon>
        <taxon>Muroidea</taxon>
        <taxon>Muridae</taxon>
        <taxon>Murinae</taxon>
        <taxon>Mus</taxon>
        <taxon>Mus</taxon>
    </lineage>
</organism>